<comment type="function">
    <text evidence="1">Binds directly to 16S ribosomal RNA.</text>
</comment>
<comment type="similarity">
    <text evidence="1">Belongs to the bacterial ribosomal protein bS20 family.</text>
</comment>
<name>RS20_RICFE</name>
<reference key="1">
    <citation type="journal article" date="2005" name="PLoS Biol.">
        <title>The genome sequence of Rickettsia felis identifies the first putative conjugative plasmid in an obligate intracellular parasite.</title>
        <authorList>
            <person name="Ogata H."/>
            <person name="Renesto P."/>
            <person name="Audic S."/>
            <person name="Robert C."/>
            <person name="Blanc G."/>
            <person name="Fournier P.-E."/>
            <person name="Parinello H."/>
            <person name="Claverie J.-M."/>
            <person name="Raoult D."/>
        </authorList>
    </citation>
    <scope>NUCLEOTIDE SEQUENCE [LARGE SCALE GENOMIC DNA]</scope>
    <source>
        <strain>ATCC VR-1525 / URRWXCal2</strain>
    </source>
</reference>
<evidence type="ECO:0000255" key="1">
    <source>
        <dbReference type="HAMAP-Rule" id="MF_00500"/>
    </source>
</evidence>
<evidence type="ECO:0000305" key="2"/>
<sequence>MANHSSAKKAARQTVKRTLINKKRSSAIKTFIKKVAHEISLGNKENANLALSVAQSKIMQGVKKNIIKLNTASRKISRLSKQIKSLNESK</sequence>
<proteinExistence type="inferred from homology"/>
<accession>Q4UMQ3</accession>
<protein>
    <recommendedName>
        <fullName evidence="1">Small ribosomal subunit protein bS20</fullName>
    </recommendedName>
    <alternativeName>
        <fullName evidence="2">30S ribosomal protein S20</fullName>
    </alternativeName>
</protein>
<organism>
    <name type="scientific">Rickettsia felis (strain ATCC VR-1525 / URRWXCal2)</name>
    <name type="common">Rickettsia azadi</name>
    <dbReference type="NCBI Taxonomy" id="315456"/>
    <lineage>
        <taxon>Bacteria</taxon>
        <taxon>Pseudomonadati</taxon>
        <taxon>Pseudomonadota</taxon>
        <taxon>Alphaproteobacteria</taxon>
        <taxon>Rickettsiales</taxon>
        <taxon>Rickettsiaceae</taxon>
        <taxon>Rickettsieae</taxon>
        <taxon>Rickettsia</taxon>
        <taxon>spotted fever group</taxon>
    </lineage>
</organism>
<feature type="chain" id="PRO_0000224985" description="Small ribosomal subunit protein bS20">
    <location>
        <begin position="1"/>
        <end position="90"/>
    </location>
</feature>
<dbReference type="EMBL" id="CP000053">
    <property type="protein sequence ID" value="AAY61155.1"/>
    <property type="molecule type" value="Genomic_DNA"/>
</dbReference>
<dbReference type="SMR" id="Q4UMQ3"/>
<dbReference type="STRING" id="315456.RF_0304"/>
<dbReference type="KEGG" id="rfe:RF_0304"/>
<dbReference type="eggNOG" id="COG0268">
    <property type="taxonomic scope" value="Bacteria"/>
</dbReference>
<dbReference type="HOGENOM" id="CLU_160655_3_0_5"/>
<dbReference type="OrthoDB" id="9807974at2"/>
<dbReference type="Proteomes" id="UP000008548">
    <property type="component" value="Chromosome"/>
</dbReference>
<dbReference type="GO" id="GO:0015935">
    <property type="term" value="C:small ribosomal subunit"/>
    <property type="evidence" value="ECO:0007669"/>
    <property type="project" value="TreeGrafter"/>
</dbReference>
<dbReference type="GO" id="GO:0070181">
    <property type="term" value="F:small ribosomal subunit rRNA binding"/>
    <property type="evidence" value="ECO:0007669"/>
    <property type="project" value="TreeGrafter"/>
</dbReference>
<dbReference type="GO" id="GO:0003735">
    <property type="term" value="F:structural constituent of ribosome"/>
    <property type="evidence" value="ECO:0007669"/>
    <property type="project" value="InterPro"/>
</dbReference>
<dbReference type="GO" id="GO:0006412">
    <property type="term" value="P:translation"/>
    <property type="evidence" value="ECO:0007669"/>
    <property type="project" value="UniProtKB-UniRule"/>
</dbReference>
<dbReference type="Gene3D" id="1.20.58.110">
    <property type="entry name" value="Ribosomal protein S20"/>
    <property type="match status" value="1"/>
</dbReference>
<dbReference type="HAMAP" id="MF_00500">
    <property type="entry name" value="Ribosomal_bS20"/>
    <property type="match status" value="1"/>
</dbReference>
<dbReference type="InterPro" id="IPR002583">
    <property type="entry name" value="Ribosomal_bS20"/>
</dbReference>
<dbReference type="InterPro" id="IPR036510">
    <property type="entry name" value="Ribosomal_bS20_sf"/>
</dbReference>
<dbReference type="NCBIfam" id="TIGR00029">
    <property type="entry name" value="S20"/>
    <property type="match status" value="1"/>
</dbReference>
<dbReference type="PANTHER" id="PTHR33398">
    <property type="entry name" value="30S RIBOSOMAL PROTEIN S20"/>
    <property type="match status" value="1"/>
</dbReference>
<dbReference type="PANTHER" id="PTHR33398:SF1">
    <property type="entry name" value="SMALL RIBOSOMAL SUBUNIT PROTEIN BS20C"/>
    <property type="match status" value="1"/>
</dbReference>
<dbReference type="Pfam" id="PF01649">
    <property type="entry name" value="Ribosomal_S20p"/>
    <property type="match status" value="1"/>
</dbReference>
<dbReference type="SUPFAM" id="SSF46992">
    <property type="entry name" value="Ribosomal protein S20"/>
    <property type="match status" value="1"/>
</dbReference>
<keyword id="KW-0687">Ribonucleoprotein</keyword>
<keyword id="KW-0689">Ribosomal protein</keyword>
<keyword id="KW-0694">RNA-binding</keyword>
<keyword id="KW-0699">rRNA-binding</keyword>
<gene>
    <name evidence="1" type="primary">rpsT</name>
    <name type="ordered locus">RF_0304</name>
</gene>